<name>RNH_WOLPM</name>
<keyword id="KW-0963">Cytoplasm</keyword>
<keyword id="KW-0255">Endonuclease</keyword>
<keyword id="KW-0378">Hydrolase</keyword>
<keyword id="KW-0460">Magnesium</keyword>
<keyword id="KW-0479">Metal-binding</keyword>
<keyword id="KW-0540">Nuclease</keyword>
<sequence>MSKKEVIIYTDGACSGNPGAGGWAAIILFQDYRKDIYGREENTTNNKMELTAVINGLKVLKFSCNINLYTDSLYVKHGITEWINKWKMNGWKTSNKKSVKNMELWKELDNVASQHEIDWKWVKAHSGDKYNEEADSLARKAIIDA</sequence>
<comment type="function">
    <text evidence="1">Endonuclease that specifically degrades the RNA of RNA-DNA hybrids.</text>
</comment>
<comment type="catalytic activity">
    <reaction evidence="1">
        <text>Endonucleolytic cleavage to 5'-phosphomonoester.</text>
        <dbReference type="EC" id="3.1.26.4"/>
    </reaction>
</comment>
<comment type="cofactor">
    <cofactor evidence="1">
        <name>Mg(2+)</name>
        <dbReference type="ChEBI" id="CHEBI:18420"/>
    </cofactor>
    <text evidence="1">Binds 1 Mg(2+) ion per subunit. May bind a second metal ion at a regulatory site, or after substrate binding.</text>
</comment>
<comment type="subunit">
    <text evidence="1">Monomer.</text>
</comment>
<comment type="subcellular location">
    <subcellularLocation>
        <location evidence="1">Cytoplasm</location>
    </subcellularLocation>
</comment>
<comment type="similarity">
    <text evidence="1">Belongs to the RNase H family.</text>
</comment>
<dbReference type="EC" id="3.1.26.4" evidence="1"/>
<dbReference type="EMBL" id="AE017196">
    <property type="protein sequence ID" value="AAS14038.1"/>
    <property type="molecule type" value="Genomic_DNA"/>
</dbReference>
<dbReference type="RefSeq" id="WP_010082655.1">
    <property type="nucleotide sequence ID" value="NZ_OX384529.1"/>
</dbReference>
<dbReference type="SMR" id="Q73I74"/>
<dbReference type="EnsemblBacteria" id="AAS14038">
    <property type="protein sequence ID" value="AAS14038"/>
    <property type="gene ID" value="WD_0304"/>
</dbReference>
<dbReference type="GeneID" id="70035797"/>
<dbReference type="KEGG" id="wol:WD_0304"/>
<dbReference type="eggNOG" id="COG0328">
    <property type="taxonomic scope" value="Bacteria"/>
</dbReference>
<dbReference type="Proteomes" id="UP000008215">
    <property type="component" value="Chromosome"/>
</dbReference>
<dbReference type="GO" id="GO:0005737">
    <property type="term" value="C:cytoplasm"/>
    <property type="evidence" value="ECO:0007669"/>
    <property type="project" value="UniProtKB-SubCell"/>
</dbReference>
<dbReference type="GO" id="GO:0000287">
    <property type="term" value="F:magnesium ion binding"/>
    <property type="evidence" value="ECO:0007669"/>
    <property type="project" value="UniProtKB-UniRule"/>
</dbReference>
<dbReference type="GO" id="GO:0003676">
    <property type="term" value="F:nucleic acid binding"/>
    <property type="evidence" value="ECO:0007669"/>
    <property type="project" value="InterPro"/>
</dbReference>
<dbReference type="GO" id="GO:0004523">
    <property type="term" value="F:RNA-DNA hybrid ribonuclease activity"/>
    <property type="evidence" value="ECO:0007669"/>
    <property type="project" value="UniProtKB-UniRule"/>
</dbReference>
<dbReference type="GO" id="GO:0043137">
    <property type="term" value="P:DNA replication, removal of RNA primer"/>
    <property type="evidence" value="ECO:0007669"/>
    <property type="project" value="TreeGrafter"/>
</dbReference>
<dbReference type="CDD" id="cd09278">
    <property type="entry name" value="RNase_HI_prokaryote_like"/>
    <property type="match status" value="1"/>
</dbReference>
<dbReference type="FunFam" id="3.30.420.10:FF:000089">
    <property type="entry name" value="Ribonuclease H"/>
    <property type="match status" value="1"/>
</dbReference>
<dbReference type="Gene3D" id="3.30.420.10">
    <property type="entry name" value="Ribonuclease H-like superfamily/Ribonuclease H"/>
    <property type="match status" value="1"/>
</dbReference>
<dbReference type="HAMAP" id="MF_00042">
    <property type="entry name" value="RNase_H"/>
    <property type="match status" value="1"/>
</dbReference>
<dbReference type="InterPro" id="IPR050092">
    <property type="entry name" value="RNase_H"/>
</dbReference>
<dbReference type="InterPro" id="IPR012337">
    <property type="entry name" value="RNaseH-like_sf"/>
</dbReference>
<dbReference type="InterPro" id="IPR002156">
    <property type="entry name" value="RNaseH_domain"/>
</dbReference>
<dbReference type="InterPro" id="IPR036397">
    <property type="entry name" value="RNaseH_sf"/>
</dbReference>
<dbReference type="InterPro" id="IPR022892">
    <property type="entry name" value="RNaseHI"/>
</dbReference>
<dbReference type="NCBIfam" id="NF001236">
    <property type="entry name" value="PRK00203.1"/>
    <property type="match status" value="1"/>
</dbReference>
<dbReference type="PANTHER" id="PTHR10642">
    <property type="entry name" value="RIBONUCLEASE H1"/>
    <property type="match status" value="1"/>
</dbReference>
<dbReference type="PANTHER" id="PTHR10642:SF26">
    <property type="entry name" value="RIBONUCLEASE H1"/>
    <property type="match status" value="1"/>
</dbReference>
<dbReference type="Pfam" id="PF00075">
    <property type="entry name" value="RNase_H"/>
    <property type="match status" value="1"/>
</dbReference>
<dbReference type="SUPFAM" id="SSF53098">
    <property type="entry name" value="Ribonuclease H-like"/>
    <property type="match status" value="1"/>
</dbReference>
<dbReference type="PROSITE" id="PS50879">
    <property type="entry name" value="RNASE_H_1"/>
    <property type="match status" value="1"/>
</dbReference>
<proteinExistence type="inferred from homology"/>
<gene>
    <name evidence="1" type="primary">rnhA</name>
    <name type="ordered locus">WD_0304</name>
</gene>
<organism>
    <name type="scientific">Wolbachia pipientis wMel</name>
    <dbReference type="NCBI Taxonomy" id="163164"/>
    <lineage>
        <taxon>Bacteria</taxon>
        <taxon>Pseudomonadati</taxon>
        <taxon>Pseudomonadota</taxon>
        <taxon>Alphaproteobacteria</taxon>
        <taxon>Rickettsiales</taxon>
        <taxon>Anaplasmataceae</taxon>
        <taxon>Wolbachieae</taxon>
        <taxon>Wolbachia</taxon>
    </lineage>
</organism>
<evidence type="ECO:0000255" key="1">
    <source>
        <dbReference type="HAMAP-Rule" id="MF_00042"/>
    </source>
</evidence>
<evidence type="ECO:0000255" key="2">
    <source>
        <dbReference type="PROSITE-ProRule" id="PRU00408"/>
    </source>
</evidence>
<protein>
    <recommendedName>
        <fullName evidence="1">Ribonuclease H</fullName>
        <shortName evidence="1">RNase H</shortName>
        <ecNumber evidence="1">3.1.26.4</ecNumber>
    </recommendedName>
</protein>
<accession>Q73I74</accession>
<reference key="1">
    <citation type="journal article" date="2004" name="PLoS Biol.">
        <title>Phylogenomics of the reproductive parasite Wolbachia pipientis wMel: a streamlined genome overrun by mobile genetic elements.</title>
        <authorList>
            <person name="Wu M."/>
            <person name="Sun L.V."/>
            <person name="Vamathevan J.J."/>
            <person name="Riegler M."/>
            <person name="DeBoy R.T."/>
            <person name="Brownlie J.C."/>
            <person name="McGraw E.A."/>
            <person name="Martin W."/>
            <person name="Esser C."/>
            <person name="Ahmadinejad N."/>
            <person name="Wiegand C."/>
            <person name="Madupu R."/>
            <person name="Beanan M.J."/>
            <person name="Brinkac L.M."/>
            <person name="Daugherty S.C."/>
            <person name="Durkin A.S."/>
            <person name="Kolonay J.F."/>
            <person name="Nelson W.C."/>
            <person name="Mohamoud Y."/>
            <person name="Lee P."/>
            <person name="Berry K.J."/>
            <person name="Young M.B."/>
            <person name="Utterback T.R."/>
            <person name="Weidman J.F."/>
            <person name="Nierman W.C."/>
            <person name="Paulsen I.T."/>
            <person name="Nelson K.E."/>
            <person name="Tettelin H."/>
            <person name="O'Neill S.L."/>
            <person name="Eisen J.A."/>
        </authorList>
    </citation>
    <scope>NUCLEOTIDE SEQUENCE [LARGE SCALE GENOMIC DNA]</scope>
</reference>
<feature type="chain" id="PRO_0000195421" description="Ribonuclease H">
    <location>
        <begin position="1"/>
        <end position="145"/>
    </location>
</feature>
<feature type="domain" description="RNase H type-1" evidence="2">
    <location>
        <begin position="2"/>
        <end position="143"/>
    </location>
</feature>
<feature type="binding site" evidence="1">
    <location>
        <position position="11"/>
    </location>
    <ligand>
        <name>Mg(2+)</name>
        <dbReference type="ChEBI" id="CHEBI:18420"/>
        <label>1</label>
    </ligand>
</feature>
<feature type="binding site" evidence="1">
    <location>
        <position position="11"/>
    </location>
    <ligand>
        <name>Mg(2+)</name>
        <dbReference type="ChEBI" id="CHEBI:18420"/>
        <label>2</label>
    </ligand>
</feature>
<feature type="binding site" evidence="1">
    <location>
        <position position="49"/>
    </location>
    <ligand>
        <name>Mg(2+)</name>
        <dbReference type="ChEBI" id="CHEBI:18420"/>
        <label>1</label>
    </ligand>
</feature>
<feature type="binding site" evidence="1">
    <location>
        <position position="71"/>
    </location>
    <ligand>
        <name>Mg(2+)</name>
        <dbReference type="ChEBI" id="CHEBI:18420"/>
        <label>1</label>
    </ligand>
</feature>
<feature type="binding site" evidence="1">
    <location>
        <position position="135"/>
    </location>
    <ligand>
        <name>Mg(2+)</name>
        <dbReference type="ChEBI" id="CHEBI:18420"/>
        <label>2</label>
    </ligand>
</feature>